<evidence type="ECO:0000255" key="1">
    <source>
        <dbReference type="HAMAP-Rule" id="MF_01318"/>
    </source>
</evidence>
<evidence type="ECO:0000305" key="2"/>
<dbReference type="EMBL" id="CP000108">
    <property type="protein sequence ID" value="ABB27627.1"/>
    <property type="molecule type" value="Genomic_DNA"/>
</dbReference>
<dbReference type="SMR" id="Q3ATP8"/>
<dbReference type="STRING" id="340177.Cag_0354"/>
<dbReference type="KEGG" id="cch:Cag_0354"/>
<dbReference type="eggNOG" id="COG0081">
    <property type="taxonomic scope" value="Bacteria"/>
</dbReference>
<dbReference type="HOGENOM" id="CLU_062853_0_0_10"/>
<dbReference type="OrthoDB" id="9803740at2"/>
<dbReference type="GO" id="GO:0015934">
    <property type="term" value="C:large ribosomal subunit"/>
    <property type="evidence" value="ECO:0007669"/>
    <property type="project" value="InterPro"/>
</dbReference>
<dbReference type="GO" id="GO:0019843">
    <property type="term" value="F:rRNA binding"/>
    <property type="evidence" value="ECO:0007669"/>
    <property type="project" value="UniProtKB-UniRule"/>
</dbReference>
<dbReference type="GO" id="GO:0003735">
    <property type="term" value="F:structural constituent of ribosome"/>
    <property type="evidence" value="ECO:0007669"/>
    <property type="project" value="InterPro"/>
</dbReference>
<dbReference type="GO" id="GO:0000049">
    <property type="term" value="F:tRNA binding"/>
    <property type="evidence" value="ECO:0007669"/>
    <property type="project" value="UniProtKB-KW"/>
</dbReference>
<dbReference type="GO" id="GO:0006417">
    <property type="term" value="P:regulation of translation"/>
    <property type="evidence" value="ECO:0007669"/>
    <property type="project" value="UniProtKB-KW"/>
</dbReference>
<dbReference type="GO" id="GO:0006412">
    <property type="term" value="P:translation"/>
    <property type="evidence" value="ECO:0007669"/>
    <property type="project" value="UniProtKB-UniRule"/>
</dbReference>
<dbReference type="CDD" id="cd00403">
    <property type="entry name" value="Ribosomal_L1"/>
    <property type="match status" value="1"/>
</dbReference>
<dbReference type="FunFam" id="3.40.50.790:FF:000001">
    <property type="entry name" value="50S ribosomal protein L1"/>
    <property type="match status" value="1"/>
</dbReference>
<dbReference type="Gene3D" id="3.30.190.20">
    <property type="match status" value="1"/>
</dbReference>
<dbReference type="Gene3D" id="3.40.50.790">
    <property type="match status" value="1"/>
</dbReference>
<dbReference type="HAMAP" id="MF_01318_B">
    <property type="entry name" value="Ribosomal_uL1_B"/>
    <property type="match status" value="1"/>
</dbReference>
<dbReference type="InterPro" id="IPR005878">
    <property type="entry name" value="Ribosom_uL1_bac-type"/>
</dbReference>
<dbReference type="InterPro" id="IPR002143">
    <property type="entry name" value="Ribosomal_uL1"/>
</dbReference>
<dbReference type="InterPro" id="IPR023674">
    <property type="entry name" value="Ribosomal_uL1-like"/>
</dbReference>
<dbReference type="InterPro" id="IPR028364">
    <property type="entry name" value="Ribosomal_uL1/biogenesis"/>
</dbReference>
<dbReference type="InterPro" id="IPR016095">
    <property type="entry name" value="Ribosomal_uL1_3-a/b-sand"/>
</dbReference>
<dbReference type="InterPro" id="IPR023673">
    <property type="entry name" value="Ribosomal_uL1_CS"/>
</dbReference>
<dbReference type="NCBIfam" id="TIGR01169">
    <property type="entry name" value="rplA_bact"/>
    <property type="match status" value="1"/>
</dbReference>
<dbReference type="PANTHER" id="PTHR36427">
    <property type="entry name" value="54S RIBOSOMAL PROTEIN L1, MITOCHONDRIAL"/>
    <property type="match status" value="1"/>
</dbReference>
<dbReference type="PANTHER" id="PTHR36427:SF3">
    <property type="entry name" value="LARGE RIBOSOMAL SUBUNIT PROTEIN UL1M"/>
    <property type="match status" value="1"/>
</dbReference>
<dbReference type="Pfam" id="PF00687">
    <property type="entry name" value="Ribosomal_L1"/>
    <property type="match status" value="1"/>
</dbReference>
<dbReference type="PIRSF" id="PIRSF002155">
    <property type="entry name" value="Ribosomal_L1"/>
    <property type="match status" value="1"/>
</dbReference>
<dbReference type="SUPFAM" id="SSF56808">
    <property type="entry name" value="Ribosomal protein L1"/>
    <property type="match status" value="1"/>
</dbReference>
<dbReference type="PROSITE" id="PS01199">
    <property type="entry name" value="RIBOSOMAL_L1"/>
    <property type="match status" value="1"/>
</dbReference>
<reference key="1">
    <citation type="submission" date="2005-08" db="EMBL/GenBank/DDBJ databases">
        <title>Complete sequence of Chlorobium chlorochromatii CaD3.</title>
        <authorList>
            <consortium name="US DOE Joint Genome Institute"/>
            <person name="Copeland A."/>
            <person name="Lucas S."/>
            <person name="Lapidus A."/>
            <person name="Barry K."/>
            <person name="Detter J.C."/>
            <person name="Glavina T."/>
            <person name="Hammon N."/>
            <person name="Israni S."/>
            <person name="Pitluck S."/>
            <person name="Bryant D."/>
            <person name="Schmutz J."/>
            <person name="Larimer F."/>
            <person name="Land M."/>
            <person name="Kyrpides N."/>
            <person name="Ivanova N."/>
            <person name="Richardson P."/>
        </authorList>
    </citation>
    <scope>NUCLEOTIDE SEQUENCE [LARGE SCALE GENOMIC DNA]</scope>
    <source>
        <strain>CaD3</strain>
    </source>
</reference>
<proteinExistence type="inferred from homology"/>
<organism>
    <name type="scientific">Chlorobium chlorochromatii (strain CaD3)</name>
    <dbReference type="NCBI Taxonomy" id="340177"/>
    <lineage>
        <taxon>Bacteria</taxon>
        <taxon>Pseudomonadati</taxon>
        <taxon>Chlorobiota</taxon>
        <taxon>Chlorobiia</taxon>
        <taxon>Chlorobiales</taxon>
        <taxon>Chlorobiaceae</taxon>
        <taxon>Chlorobium/Pelodictyon group</taxon>
        <taxon>Chlorobium</taxon>
    </lineage>
</organism>
<comment type="function">
    <text evidence="1">Binds directly to 23S rRNA. The L1 stalk is quite mobile in the ribosome, and is involved in E site tRNA release.</text>
</comment>
<comment type="function">
    <text evidence="1">Protein L1 is also a translational repressor protein, it controls the translation of the L11 operon by binding to its mRNA.</text>
</comment>
<comment type="subunit">
    <text evidence="1">Part of the 50S ribosomal subunit.</text>
</comment>
<comment type="similarity">
    <text evidence="1">Belongs to the universal ribosomal protein uL1 family.</text>
</comment>
<name>RL1_CHLCH</name>
<sequence>MAGKKYREAATKIERFRDYELAEAIEKVKEVTTTKFDATVDVAVKLGVDPRHADQVVRGTVMLPHGTGKTVSVLVICKETKAEEAKEAGADFVGFEEYITKIQEGWTGVDVIIATPDVMGQLGKVAKILGPRGLMPNPKSGTVTMDVAKAVKEVKAGKIEFRVDKAGNIHAPVGKVSFDSEHLNTNIVAFLKEVVRLKPSAAKGQYVQGIALSSTMSPSVKVKMDKFIS</sequence>
<protein>
    <recommendedName>
        <fullName evidence="1">Large ribosomal subunit protein uL1</fullName>
    </recommendedName>
    <alternativeName>
        <fullName evidence="2">50S ribosomal protein L1</fullName>
    </alternativeName>
</protein>
<keyword id="KW-0678">Repressor</keyword>
<keyword id="KW-0687">Ribonucleoprotein</keyword>
<keyword id="KW-0689">Ribosomal protein</keyword>
<keyword id="KW-0694">RNA-binding</keyword>
<keyword id="KW-0699">rRNA-binding</keyword>
<keyword id="KW-0810">Translation regulation</keyword>
<keyword id="KW-0820">tRNA-binding</keyword>
<gene>
    <name evidence="1" type="primary">rplA</name>
    <name type="ordered locus">Cag_0354</name>
</gene>
<feature type="chain" id="PRO_0000230601" description="Large ribosomal subunit protein uL1">
    <location>
        <begin position="1"/>
        <end position="229"/>
    </location>
</feature>
<accession>Q3ATP8</accession>